<name>U2AF1_SCHPO</name>
<reference key="1">
    <citation type="journal article" date="1996" name="Nucleic Acids Res.">
        <title>The small subunit of the splicing factor U2AF is conserved in fission yeast.</title>
        <authorList>
            <person name="Wentz-Hunter K."/>
            <person name="Potashkin J."/>
        </authorList>
    </citation>
    <scope>NUCLEOTIDE SEQUENCE [GENOMIC DNA]</scope>
    <scope>CHARACTERIZATION</scope>
    <source>
        <strain>972 / ATCC 24843</strain>
    </source>
</reference>
<reference key="2">
    <citation type="submission" date="1996-02" db="EMBL/GenBank/DDBJ databases">
        <authorList>
            <person name="Potashkin J."/>
        </authorList>
    </citation>
    <scope>SEQUENCE REVISION</scope>
</reference>
<reference key="3">
    <citation type="journal article" date="2002" name="Nature">
        <title>The genome sequence of Schizosaccharomyces pombe.</title>
        <authorList>
            <person name="Wood V."/>
            <person name="Gwilliam R."/>
            <person name="Rajandream M.A."/>
            <person name="Lyne M.H."/>
            <person name="Lyne R."/>
            <person name="Stewart A."/>
            <person name="Sgouros J.G."/>
            <person name="Peat N."/>
            <person name="Hayles J."/>
            <person name="Baker S.G."/>
            <person name="Basham D."/>
            <person name="Bowman S."/>
            <person name="Brooks K."/>
            <person name="Brown D."/>
            <person name="Brown S."/>
            <person name="Chillingworth T."/>
            <person name="Churcher C.M."/>
            <person name="Collins M."/>
            <person name="Connor R."/>
            <person name="Cronin A."/>
            <person name="Davis P."/>
            <person name="Feltwell T."/>
            <person name="Fraser A."/>
            <person name="Gentles S."/>
            <person name="Goble A."/>
            <person name="Hamlin N."/>
            <person name="Harris D.E."/>
            <person name="Hidalgo J."/>
            <person name="Hodgson G."/>
            <person name="Holroyd S."/>
            <person name="Hornsby T."/>
            <person name="Howarth S."/>
            <person name="Huckle E.J."/>
            <person name="Hunt S."/>
            <person name="Jagels K."/>
            <person name="James K.D."/>
            <person name="Jones L."/>
            <person name="Jones M."/>
            <person name="Leather S."/>
            <person name="McDonald S."/>
            <person name="McLean J."/>
            <person name="Mooney P."/>
            <person name="Moule S."/>
            <person name="Mungall K.L."/>
            <person name="Murphy L.D."/>
            <person name="Niblett D."/>
            <person name="Odell C."/>
            <person name="Oliver K."/>
            <person name="O'Neil S."/>
            <person name="Pearson D."/>
            <person name="Quail M.A."/>
            <person name="Rabbinowitsch E."/>
            <person name="Rutherford K.M."/>
            <person name="Rutter S."/>
            <person name="Saunders D."/>
            <person name="Seeger K."/>
            <person name="Sharp S."/>
            <person name="Skelton J."/>
            <person name="Simmonds M.N."/>
            <person name="Squares R."/>
            <person name="Squares S."/>
            <person name="Stevens K."/>
            <person name="Taylor K."/>
            <person name="Taylor R.G."/>
            <person name="Tivey A."/>
            <person name="Walsh S.V."/>
            <person name="Warren T."/>
            <person name="Whitehead S."/>
            <person name="Woodward J.R."/>
            <person name="Volckaert G."/>
            <person name="Aert R."/>
            <person name="Robben J."/>
            <person name="Grymonprez B."/>
            <person name="Weltjens I."/>
            <person name="Vanstreels E."/>
            <person name="Rieger M."/>
            <person name="Schaefer M."/>
            <person name="Mueller-Auer S."/>
            <person name="Gabel C."/>
            <person name="Fuchs M."/>
            <person name="Duesterhoeft A."/>
            <person name="Fritzc C."/>
            <person name="Holzer E."/>
            <person name="Moestl D."/>
            <person name="Hilbert H."/>
            <person name="Borzym K."/>
            <person name="Langer I."/>
            <person name="Beck A."/>
            <person name="Lehrach H."/>
            <person name="Reinhardt R."/>
            <person name="Pohl T.M."/>
            <person name="Eger P."/>
            <person name="Zimmermann W."/>
            <person name="Wedler H."/>
            <person name="Wambutt R."/>
            <person name="Purnelle B."/>
            <person name="Goffeau A."/>
            <person name="Cadieu E."/>
            <person name="Dreano S."/>
            <person name="Gloux S."/>
            <person name="Lelaure V."/>
            <person name="Mottier S."/>
            <person name="Galibert F."/>
            <person name="Aves S.J."/>
            <person name="Xiang Z."/>
            <person name="Hunt C."/>
            <person name="Moore K."/>
            <person name="Hurst S.M."/>
            <person name="Lucas M."/>
            <person name="Rochet M."/>
            <person name="Gaillardin C."/>
            <person name="Tallada V.A."/>
            <person name="Garzon A."/>
            <person name="Thode G."/>
            <person name="Daga R.R."/>
            <person name="Cruzado L."/>
            <person name="Jimenez J."/>
            <person name="Sanchez M."/>
            <person name="del Rey F."/>
            <person name="Benito J."/>
            <person name="Dominguez A."/>
            <person name="Revuelta J.L."/>
            <person name="Moreno S."/>
            <person name="Armstrong J."/>
            <person name="Forsburg S.L."/>
            <person name="Cerutti L."/>
            <person name="Lowe T."/>
            <person name="McCombie W.R."/>
            <person name="Paulsen I."/>
            <person name="Potashkin J."/>
            <person name="Shpakovski G.V."/>
            <person name="Ussery D."/>
            <person name="Barrell B.G."/>
            <person name="Nurse P."/>
        </authorList>
    </citation>
    <scope>NUCLEOTIDE SEQUENCE [LARGE SCALE GENOMIC DNA]</scope>
    <source>
        <strain>972 / ATCC 24843</strain>
    </source>
</reference>
<reference key="4">
    <citation type="journal article" date="2001" name="Biochem. Biophys. Res. Commun.">
        <title>The fission yeast ortholog of the coregulator SKIP interacts with the small subunit of U2AF.</title>
        <authorList>
            <person name="Ambrozkova M."/>
            <person name="Puta F."/>
            <person name="Fukova I."/>
            <person name="Skruzny M."/>
            <person name="Brabek J."/>
            <person name="Folk P."/>
        </authorList>
    </citation>
    <scope>INTERACTION WITH CWF13</scope>
</reference>
<reference key="5">
    <citation type="journal article" date="2002" name="EMBO J.">
        <title>Pre-spliceosome formation in S.pombe requires a stable complex of SF1-U2AF(59)-U2AF(23).</title>
        <authorList>
            <person name="Huang T."/>
            <person name="Vilardell J."/>
            <person name="Query C.C."/>
        </authorList>
    </citation>
    <scope>FUNCTION</scope>
    <scope>INTERACTION WITH U2AF59 AND SF1</scope>
</reference>
<feature type="chain" id="PRO_0000081998" description="Splicing factor U2AF 23 kDa subunit">
    <location>
        <begin position="1"/>
        <end position="216"/>
    </location>
</feature>
<feature type="domain" description="RRM" evidence="1">
    <location>
        <begin position="44"/>
        <end position="141"/>
    </location>
</feature>
<feature type="zinc finger region" description="C3H1-type 1" evidence="2">
    <location>
        <begin position="12"/>
        <end position="40"/>
    </location>
</feature>
<feature type="zinc finger region" description="C3H1-type 2" evidence="2">
    <location>
        <begin position="143"/>
        <end position="170"/>
    </location>
</feature>
<feature type="region of interest" description="Disordered" evidence="3">
    <location>
        <begin position="194"/>
        <end position="216"/>
    </location>
</feature>
<feature type="strand" evidence="7">
    <location>
        <begin position="15"/>
        <end position="17"/>
    </location>
</feature>
<feature type="helix" evidence="6">
    <location>
        <begin position="19"/>
        <end position="24"/>
    </location>
</feature>
<feature type="helix" evidence="6">
    <location>
        <begin position="30"/>
        <end position="32"/>
    </location>
</feature>
<feature type="strand" evidence="6">
    <location>
        <begin position="34"/>
        <end position="36"/>
    </location>
</feature>
<feature type="strand" evidence="6">
    <location>
        <begin position="44"/>
        <end position="48"/>
    </location>
</feature>
<feature type="helix" evidence="6">
    <location>
        <begin position="55"/>
        <end position="57"/>
    </location>
</feature>
<feature type="strand" evidence="8">
    <location>
        <begin position="58"/>
        <end position="60"/>
    </location>
</feature>
<feature type="helix" evidence="6">
    <location>
        <begin position="61"/>
        <end position="63"/>
    </location>
</feature>
<feature type="helix" evidence="6">
    <location>
        <begin position="66"/>
        <end position="84"/>
    </location>
</feature>
<feature type="helix" evidence="6">
    <location>
        <begin position="85"/>
        <end position="87"/>
    </location>
</feature>
<feature type="strand" evidence="6">
    <location>
        <begin position="90"/>
        <end position="96"/>
    </location>
</feature>
<feature type="turn" evidence="6">
    <location>
        <begin position="101"/>
        <end position="105"/>
    </location>
</feature>
<feature type="strand" evidence="6">
    <location>
        <begin position="107"/>
        <end position="113"/>
    </location>
</feature>
<feature type="helix" evidence="6">
    <location>
        <begin position="114"/>
        <end position="124"/>
    </location>
</feature>
<feature type="strand" evidence="7">
    <location>
        <begin position="128"/>
        <end position="133"/>
    </location>
</feature>
<feature type="strand" evidence="6">
    <location>
        <begin position="137"/>
        <end position="139"/>
    </location>
</feature>
<feature type="helix" evidence="6">
    <location>
        <begin position="144"/>
        <end position="147"/>
    </location>
</feature>
<feature type="helix" evidence="6">
    <location>
        <begin position="150"/>
        <end position="154"/>
    </location>
</feature>
<feature type="helix" evidence="6">
    <location>
        <begin position="160"/>
        <end position="162"/>
    </location>
</feature>
<feature type="strand" evidence="7">
    <location>
        <begin position="164"/>
        <end position="166"/>
    </location>
</feature>
<feature type="helix" evidence="6">
    <location>
        <begin position="173"/>
        <end position="191"/>
    </location>
</feature>
<accession>Q09176</accession>
<evidence type="ECO:0000255" key="1">
    <source>
        <dbReference type="PROSITE-ProRule" id="PRU00176"/>
    </source>
</evidence>
<evidence type="ECO:0000255" key="2">
    <source>
        <dbReference type="PROSITE-ProRule" id="PRU00723"/>
    </source>
</evidence>
<evidence type="ECO:0000256" key="3">
    <source>
        <dbReference type="SAM" id="MobiDB-lite"/>
    </source>
</evidence>
<evidence type="ECO:0000269" key="4">
    <source>
    </source>
</evidence>
<evidence type="ECO:0000269" key="5">
    <source>
    </source>
</evidence>
<evidence type="ECO:0007829" key="6">
    <source>
        <dbReference type="PDB" id="4YH8"/>
    </source>
</evidence>
<evidence type="ECO:0007829" key="7">
    <source>
        <dbReference type="PDB" id="7C06"/>
    </source>
</evidence>
<evidence type="ECO:0007829" key="8">
    <source>
        <dbReference type="PDB" id="7C08"/>
    </source>
</evidence>
<sequence length="216" mass="25030">MASHLASIYGTEQDKVNCSFYYKIGACRHGERCSRKHVKPNFSQTILCPNMYKNPIHEPNGKKFTQRELAEQFDAFYEDMFCEFSKYGEVEQLVVCDNVGDHLVGNVYVRFKYEESAQNAIDDLNSRWYSQRPVYAELSPVTDFREACCRQHETSECQRGGLCNFMHAKKPSPQLLRDLVLAQRKYLALNAAEEMKKEPNSDSTNRWVSVTAERKN</sequence>
<proteinExistence type="evidence at protein level"/>
<dbReference type="EMBL" id="U48234">
    <property type="protein sequence ID" value="AAC49805.1"/>
    <property type="molecule type" value="Genomic_DNA"/>
</dbReference>
<dbReference type="EMBL" id="CU329670">
    <property type="protein sequence ID" value="CAB55173.1"/>
    <property type="molecule type" value="Genomic_DNA"/>
</dbReference>
<dbReference type="PIR" id="T39243">
    <property type="entry name" value="T39243"/>
</dbReference>
<dbReference type="PDB" id="4YH8">
    <property type="method" value="X-ray"/>
    <property type="resolution" value="1.70 A"/>
    <property type="chains" value="A=1-216"/>
</dbReference>
<dbReference type="PDB" id="7C06">
    <property type="method" value="X-ray"/>
    <property type="resolution" value="3.02 A"/>
    <property type="chains" value="A/D/G/J/M/P/S/V/Y=1-216"/>
</dbReference>
<dbReference type="PDB" id="7C07">
    <property type="method" value="X-ray"/>
    <property type="resolution" value="3.20 A"/>
    <property type="chains" value="A/D/G/J/M/P/S/V/Y=1-216"/>
</dbReference>
<dbReference type="PDB" id="7C08">
    <property type="method" value="X-ray"/>
    <property type="resolution" value="3.35 A"/>
    <property type="chains" value="A/D/G/J/M/P/S/V/Y=1-216"/>
</dbReference>
<dbReference type="PDBsum" id="4YH8"/>
<dbReference type="PDBsum" id="7C06"/>
<dbReference type="PDBsum" id="7C07"/>
<dbReference type="PDBsum" id="7C08"/>
<dbReference type="SMR" id="Q09176"/>
<dbReference type="BioGRID" id="278942">
    <property type="interactions" value="14"/>
</dbReference>
<dbReference type="FunCoup" id="Q09176">
    <property type="interactions" value="557"/>
</dbReference>
<dbReference type="IntAct" id="Q09176">
    <property type="interactions" value="1"/>
</dbReference>
<dbReference type="STRING" id="284812.Q09176"/>
<dbReference type="iPTMnet" id="Q09176"/>
<dbReference type="PaxDb" id="4896-SPAP8A3.06.1"/>
<dbReference type="EnsemblFungi" id="SPAP8A3.06.1">
    <property type="protein sequence ID" value="SPAP8A3.06.1:pep"/>
    <property type="gene ID" value="SPAP8A3.06"/>
</dbReference>
<dbReference type="KEGG" id="spo:2542482"/>
<dbReference type="PomBase" id="SPAP8A3.06"/>
<dbReference type="VEuPathDB" id="FungiDB:SPAP8A3.06"/>
<dbReference type="eggNOG" id="KOG2202">
    <property type="taxonomic scope" value="Eukaryota"/>
</dbReference>
<dbReference type="HOGENOM" id="CLU_059852_1_0_1"/>
<dbReference type="InParanoid" id="Q09176"/>
<dbReference type="OMA" id="MIDTRQA"/>
<dbReference type="PhylomeDB" id="Q09176"/>
<dbReference type="EvolutionaryTrace" id="Q09176"/>
<dbReference type="PRO" id="PR:Q09176"/>
<dbReference type="Proteomes" id="UP000002485">
    <property type="component" value="Chromosome I"/>
</dbReference>
<dbReference type="GO" id="GO:0000243">
    <property type="term" value="C:commitment complex"/>
    <property type="evidence" value="ECO:0000314"/>
    <property type="project" value="PomBase"/>
</dbReference>
<dbReference type="GO" id="GO:0005829">
    <property type="term" value="C:cytosol"/>
    <property type="evidence" value="ECO:0007005"/>
    <property type="project" value="PomBase"/>
</dbReference>
<dbReference type="GO" id="GO:0005634">
    <property type="term" value="C:nucleus"/>
    <property type="evidence" value="ECO:0007005"/>
    <property type="project" value="PomBase"/>
</dbReference>
<dbReference type="GO" id="GO:0005681">
    <property type="term" value="C:spliceosomal complex"/>
    <property type="evidence" value="ECO:0000318"/>
    <property type="project" value="GO_Central"/>
</dbReference>
<dbReference type="GO" id="GO:0071004">
    <property type="term" value="C:U2-type prespliceosome"/>
    <property type="evidence" value="ECO:0000314"/>
    <property type="project" value="PomBase"/>
</dbReference>
<dbReference type="GO" id="GO:0089701">
    <property type="term" value="C:U2AF complex"/>
    <property type="evidence" value="ECO:0000314"/>
    <property type="project" value="PomBase"/>
</dbReference>
<dbReference type="GO" id="GO:0030628">
    <property type="term" value="F:pre-mRNA 3'-splice site binding"/>
    <property type="evidence" value="ECO:0000269"/>
    <property type="project" value="PomBase"/>
</dbReference>
<dbReference type="GO" id="GO:0008270">
    <property type="term" value="F:zinc ion binding"/>
    <property type="evidence" value="ECO:0007669"/>
    <property type="project" value="UniProtKB-KW"/>
</dbReference>
<dbReference type="GO" id="GO:0000389">
    <property type="term" value="P:mRNA 3'-splice site recognition"/>
    <property type="evidence" value="ECO:0000269"/>
    <property type="project" value="PomBase"/>
</dbReference>
<dbReference type="GO" id="GO:0045292">
    <property type="term" value="P:mRNA cis splicing, via spliceosome"/>
    <property type="evidence" value="ECO:0000315"/>
    <property type="project" value="PomBase"/>
</dbReference>
<dbReference type="GO" id="GO:0000398">
    <property type="term" value="P:mRNA splicing, via spliceosome"/>
    <property type="evidence" value="ECO:0000318"/>
    <property type="project" value="GO_Central"/>
</dbReference>
<dbReference type="CDD" id="cd12538">
    <property type="entry name" value="RRM_U2AF35"/>
    <property type="match status" value="1"/>
</dbReference>
<dbReference type="FunFam" id="3.30.70.330:FF:000066">
    <property type="entry name" value="Splicing factor u2af 23 kDa subunit"/>
    <property type="match status" value="1"/>
</dbReference>
<dbReference type="Gene3D" id="3.30.70.330">
    <property type="match status" value="1"/>
</dbReference>
<dbReference type="InterPro" id="IPR012677">
    <property type="entry name" value="Nucleotide-bd_a/b_plait_sf"/>
</dbReference>
<dbReference type="InterPro" id="IPR035979">
    <property type="entry name" value="RBD_domain_sf"/>
</dbReference>
<dbReference type="InterPro" id="IPR000504">
    <property type="entry name" value="RRM_dom"/>
</dbReference>
<dbReference type="InterPro" id="IPR003954">
    <property type="entry name" value="RRM_dom_euk"/>
</dbReference>
<dbReference type="InterPro" id="IPR009145">
    <property type="entry name" value="U2AF_small"/>
</dbReference>
<dbReference type="InterPro" id="IPR000571">
    <property type="entry name" value="Znf_CCCH"/>
</dbReference>
<dbReference type="PANTHER" id="PTHR12620">
    <property type="entry name" value="U2 SNRNP AUXILIARY FACTOR, SMALL SUBUNIT"/>
    <property type="match status" value="1"/>
</dbReference>
<dbReference type="Pfam" id="PF00076">
    <property type="entry name" value="RRM_1"/>
    <property type="match status" value="1"/>
</dbReference>
<dbReference type="Pfam" id="PF00642">
    <property type="entry name" value="zf-CCCH"/>
    <property type="match status" value="2"/>
</dbReference>
<dbReference type="PRINTS" id="PR01848">
    <property type="entry name" value="U2AUXFACTOR"/>
</dbReference>
<dbReference type="SMART" id="SM00361">
    <property type="entry name" value="RRM_1"/>
    <property type="match status" value="1"/>
</dbReference>
<dbReference type="SMART" id="SM00356">
    <property type="entry name" value="ZnF_C3H1"/>
    <property type="match status" value="2"/>
</dbReference>
<dbReference type="SUPFAM" id="SSF54928">
    <property type="entry name" value="RNA-binding domain, RBD"/>
    <property type="match status" value="1"/>
</dbReference>
<dbReference type="PROSITE" id="PS50102">
    <property type="entry name" value="RRM"/>
    <property type="match status" value="1"/>
</dbReference>
<dbReference type="PROSITE" id="PS50103">
    <property type="entry name" value="ZF_C3H1"/>
    <property type="match status" value="2"/>
</dbReference>
<keyword id="KW-0002">3D-structure</keyword>
<keyword id="KW-0479">Metal-binding</keyword>
<keyword id="KW-0507">mRNA processing</keyword>
<keyword id="KW-0508">mRNA splicing</keyword>
<keyword id="KW-0539">Nucleus</keyword>
<keyword id="KW-1185">Reference proteome</keyword>
<keyword id="KW-0677">Repeat</keyword>
<keyword id="KW-0694">RNA-binding</keyword>
<keyword id="KW-0862">Zinc</keyword>
<keyword id="KW-0863">Zinc-finger</keyword>
<protein>
    <recommendedName>
        <fullName>Splicing factor U2AF 23 kDa subunit</fullName>
    </recommendedName>
    <alternativeName>
        <fullName>U2 auxiliary factor 23 kDa subunit</fullName>
        <shortName>U2AF23</shortName>
    </alternativeName>
    <alternativeName>
        <fullName>U2 snRNP auxiliary factor small subunit</fullName>
    </alternativeName>
</protein>
<organism>
    <name type="scientific">Schizosaccharomyces pombe (strain 972 / ATCC 24843)</name>
    <name type="common">Fission yeast</name>
    <dbReference type="NCBI Taxonomy" id="284812"/>
    <lineage>
        <taxon>Eukaryota</taxon>
        <taxon>Fungi</taxon>
        <taxon>Dikarya</taxon>
        <taxon>Ascomycota</taxon>
        <taxon>Taphrinomycotina</taxon>
        <taxon>Schizosaccharomycetes</taxon>
        <taxon>Schizosaccharomycetales</taxon>
        <taxon>Schizosaccharomycetaceae</taxon>
        <taxon>Schizosaccharomyces</taxon>
    </lineage>
</organism>
<comment type="function">
    <text evidence="5">Necessary for the splicing of pre-mRNA. The SF1-U2AF59-U2AF23 complex has a role in the recognition of the branch site (5'-UACUAAC-3'), the pyrimidine tract and the 3'-splice site at the 3'-end of introns.</text>
</comment>
<comment type="subunit">
    <text evidence="4 5">Forms a heterodimer with the U2AF large subunit. Can also form a homodimer. U2AF large subunit (U2AF59), U2AF small subunit (U2AF23) and SF1 (bpb1) interact to form a complex required for complex A formation. Interacts with cwf13.</text>
</comment>
<comment type="subcellular location">
    <subcellularLocation>
        <location>Nucleus</location>
    </subcellularLocation>
</comment>
<gene>
    <name type="ORF">SPAP8A3.06</name>
</gene>